<evidence type="ECO:0000250" key="1"/>
<evidence type="ECO:0000255" key="2">
    <source>
        <dbReference type="PROSITE-ProRule" id="PRU00214"/>
    </source>
</evidence>
<evidence type="ECO:0000269" key="3">
    <source>
    </source>
</evidence>
<evidence type="ECO:0000305" key="4"/>
<dbReference type="EMBL" id="AY090541">
    <property type="protein sequence ID" value="AAM22748.1"/>
    <property type="molecule type" value="mRNA"/>
</dbReference>
<dbReference type="SMR" id="P0C073"/>
<dbReference type="GO" id="GO:0005737">
    <property type="term" value="C:cytoplasm"/>
    <property type="evidence" value="ECO:0007669"/>
    <property type="project" value="UniProtKB-SubCell"/>
</dbReference>
<dbReference type="GO" id="GO:0005634">
    <property type="term" value="C:nucleus"/>
    <property type="evidence" value="ECO:0007669"/>
    <property type="project" value="UniProtKB-SubCell"/>
</dbReference>
<dbReference type="GO" id="GO:0003729">
    <property type="term" value="F:mRNA binding"/>
    <property type="evidence" value="ECO:0007669"/>
    <property type="project" value="UniProtKB-ARBA"/>
</dbReference>
<dbReference type="CDD" id="cd01806">
    <property type="entry name" value="Ubl_NEDD8"/>
    <property type="match status" value="1"/>
</dbReference>
<dbReference type="CDD" id="cd01803">
    <property type="entry name" value="Ubl_ubiquitin"/>
    <property type="match status" value="1"/>
</dbReference>
<dbReference type="FunFam" id="3.10.20.90:FF:000023">
    <property type="entry name" value="NEDD8 protein"/>
    <property type="match status" value="1"/>
</dbReference>
<dbReference type="FunFam" id="3.10.20.90:FF:000016">
    <property type="entry name" value="Polyubiquitin 3"/>
    <property type="match status" value="1"/>
</dbReference>
<dbReference type="Gene3D" id="3.10.20.90">
    <property type="entry name" value="Phosphatidylinositol 3-kinase Catalytic Subunit, Chain A, domain 1"/>
    <property type="match status" value="2"/>
</dbReference>
<dbReference type="InterPro" id="IPR038738">
    <property type="entry name" value="Nedd8-like"/>
</dbReference>
<dbReference type="InterPro" id="IPR000626">
    <property type="entry name" value="Ubiquitin-like_dom"/>
</dbReference>
<dbReference type="InterPro" id="IPR029071">
    <property type="entry name" value="Ubiquitin-like_domsf"/>
</dbReference>
<dbReference type="InterPro" id="IPR019954">
    <property type="entry name" value="Ubiquitin_CS"/>
</dbReference>
<dbReference type="InterPro" id="IPR019956">
    <property type="entry name" value="Ubiquitin_dom"/>
</dbReference>
<dbReference type="InterPro" id="IPR050158">
    <property type="entry name" value="Ubiquitin_ubiquitin-like"/>
</dbReference>
<dbReference type="PANTHER" id="PTHR10666">
    <property type="entry name" value="UBIQUITIN"/>
    <property type="match status" value="1"/>
</dbReference>
<dbReference type="Pfam" id="PF00240">
    <property type="entry name" value="ubiquitin"/>
    <property type="match status" value="2"/>
</dbReference>
<dbReference type="PRINTS" id="PR00348">
    <property type="entry name" value="UBIQUITIN"/>
</dbReference>
<dbReference type="SMART" id="SM00213">
    <property type="entry name" value="UBQ"/>
    <property type="match status" value="2"/>
</dbReference>
<dbReference type="SUPFAM" id="SSF54236">
    <property type="entry name" value="Ubiquitin-like"/>
    <property type="match status" value="2"/>
</dbReference>
<dbReference type="PROSITE" id="PS00299">
    <property type="entry name" value="UBIQUITIN_1"/>
    <property type="match status" value="2"/>
</dbReference>
<dbReference type="PROSITE" id="PS50053">
    <property type="entry name" value="UBIQUITIN_2"/>
    <property type="match status" value="2"/>
</dbReference>
<name>RUB1_DESAN</name>
<keyword id="KW-0963">Cytoplasm</keyword>
<keyword id="KW-1017">Isopeptide bond</keyword>
<keyword id="KW-0539">Nucleus</keyword>
<keyword id="KW-0677">Repeat</keyword>
<keyword id="KW-0832">Ubl conjugation</keyword>
<keyword id="KW-0833">Ubl conjugation pathway</keyword>
<proteinExistence type="evidence at transcript level"/>
<gene>
    <name type="primary">RUB1</name>
</gene>
<sequence>MQIFVKTLTGKTITLEVESSDTIDNVKAKIQDKEGIPPDQQRLIFAGKQLEDGRTLADYNIQKESTLHLVLRLRGGTMIKVKTLTGKEIEIDIEPTDTIDRVKERVEEKEGIPPVQQRLIYAGKQLADDKTAKDYNIEGGSVLHLVLALRGGY</sequence>
<comment type="function">
    <text evidence="1">Ubiquitin exists either covalently attached to another protein, or free (unanchored). When covalently bound, it is conjugated to target proteins via an isopeptide bond either as a monomer (monoubiquitin), a polymer linked via different Lys residues of the ubiquitin (polyubiquitin chains) or a linear polymer linked via the initiator Met of the ubiquitin (linear polyubiquitin chains). Polyubiquitin chains, when attached to a target protein, have different functions depending on the Lys residue of the ubiquitin that is linked: Lys-48-linked is involved in protein degradation via the proteasome; Lys-63-linked is involved in endocytosis, and DNA-damage responses. Linear polymer chains formed via attachment by the initiator Met lead to cell signaling. Ubiquitin is usually conjugated to Lys residues of target proteins, however, in rare cases, conjugation to Cys or Ser residues has been observed. When polyubiquitin is free (unanchored-polyubiquitin), it also has distinct roles, such as in activation of protein kinases, and in signaling (By similarity).</text>
</comment>
<comment type="function">
    <molecule>NEDD8-like protein RUB1</molecule>
    <text evidence="3">Probably function as a stable post-translational protein modifier. May be involved during cold acclimation.</text>
</comment>
<comment type="subcellular location">
    <molecule>Ubiquitin</molecule>
    <subcellularLocation>
        <location evidence="1">Cytoplasm</location>
    </subcellularLocation>
    <subcellularLocation>
        <location evidence="1">Nucleus</location>
    </subcellularLocation>
</comment>
<comment type="tissue specificity">
    <text evidence="3">At 13 degrees Celsius, expressed in roots and to a lower extent in old leaves and crown. When transferred at 4 degrees Celsius, levels increase in leaves and crown but decrease in roots.</text>
</comment>
<comment type="induction">
    <text evidence="3">By cold and PEG, but not by NaCl.</text>
</comment>
<comment type="miscellaneous">
    <text>Ubiquitin is generally synthesized as a polyubiquitin precursor with tandem head to tail repeats. Often, there is one to three additional amino acids after the last repeat, removed in the mature protein. Alternatively, ubiquitin extension protein is synthesized as a single copy of ubiquitin fused to a ribosomal protein (either L40 or S27A) or to an ubiquitin-related protein (either RUB1 or RUB2). Following translation, extension protein is cleaved from ubiquitin.</text>
</comment>
<comment type="similarity">
    <text evidence="4">Belongs to the ubiquitin family.</text>
</comment>
<protein>
    <recommendedName>
        <fullName>Ubiquitin-NEDD8-like protein RUB1</fullName>
    </recommendedName>
    <component>
        <recommendedName>
            <fullName>Ubiquitin</fullName>
        </recommendedName>
    </component>
    <component>
        <recommendedName>
            <fullName>NEDD8-like protein RUB1</fullName>
        </recommendedName>
        <alternativeName>
            <fullName>DaRUB1</fullName>
        </alternativeName>
        <alternativeName>
            <fullName>Ubiquitin-related protein 1</fullName>
        </alternativeName>
    </component>
</protein>
<reference key="1">
    <citation type="journal article" date="2003" name="Extremophiles">
        <title>Identification and characterization of three novel cold acclimation-responsive genes from the extremophile hair grass Deschampsia antarctica Desv.</title>
        <authorList>
            <person name="Gidekel M."/>
            <person name="Destefano-Beltran L."/>
            <person name="Garcia P."/>
            <person name="Mujica L."/>
            <person name="Leal P."/>
            <person name="Cuba M."/>
            <person name="Fuentes L."/>
            <person name="Bravo L.A."/>
            <person name="Corcuera L.J."/>
            <person name="Alberdi M."/>
            <person name="Concha I."/>
            <person name="Gutierrez A."/>
        </authorList>
    </citation>
    <scope>NUCLEOTIDE SEQUENCE [MRNA]</scope>
    <scope>FUNCTION</scope>
    <scope>TISSUE SPECIFICITY</scope>
    <scope>INDUCTION</scope>
    <source>
        <tissue>Leaf</tissue>
    </source>
</reference>
<organism>
    <name type="scientific">Deschampsia antarctica</name>
    <name type="common">Antarctic hair grass</name>
    <dbReference type="NCBI Taxonomy" id="159298"/>
    <lineage>
        <taxon>Eukaryota</taxon>
        <taxon>Viridiplantae</taxon>
        <taxon>Streptophyta</taxon>
        <taxon>Embryophyta</taxon>
        <taxon>Tracheophyta</taxon>
        <taxon>Spermatophyta</taxon>
        <taxon>Magnoliopsida</taxon>
        <taxon>Liliopsida</taxon>
        <taxon>Poales</taxon>
        <taxon>Poaceae</taxon>
        <taxon>BOP clade</taxon>
        <taxon>Pooideae</taxon>
        <taxon>Poodae</taxon>
        <taxon>Poeae</taxon>
        <taxon>Poeae Chloroplast Group 2 (Poeae type)</taxon>
        <taxon>Aristaveninae</taxon>
        <taxon>Deschampsia</taxon>
    </lineage>
</organism>
<feature type="chain" id="PRO_0000396912" description="Ubiquitin">
    <location>
        <begin position="1"/>
        <end position="76"/>
    </location>
</feature>
<feature type="chain" id="PRO_0000035971" description="NEDD8-like protein RUB1">
    <location>
        <begin position="77"/>
        <end position="152"/>
    </location>
</feature>
<feature type="propeptide" id="PRO_0000035972" evidence="4">
    <location>
        <position position="153"/>
    </location>
</feature>
<feature type="domain" description="Ubiquitin-like 1" evidence="2">
    <location>
        <begin position="1"/>
        <end position="76"/>
    </location>
</feature>
<feature type="domain" description="Ubiquitin-like 2" evidence="2">
    <location>
        <begin position="77"/>
        <end position="152"/>
    </location>
</feature>
<feature type="cross-link" description="Glycyl lysine isopeptide (Lys-Gly) (interchain with G-Cter in ubiquitin)" evidence="1">
    <location>
        <position position="48"/>
    </location>
</feature>
<feature type="cross-link" description="Glycyl lysine isopeptide (Lys-Gly) (interchain with G-Cter in ubiquitin)" evidence="1">
    <location>
        <position position="63"/>
    </location>
</feature>
<feature type="cross-link" description="Glycyl lysine isopeptide (Gly-Lys) (interchain with K-? in acceptor proteins)" evidence="2">
    <location>
        <position position="76"/>
    </location>
</feature>
<feature type="cross-link" description="Glycyl lysine isopeptide (Gly-Lys) (interchain with K-? in acceptor proteins)" evidence="2">
    <location>
        <position position="152"/>
    </location>
</feature>
<accession>P0C073</accession>
<accession>P0C072</accession>
<accession>Q8LPV5</accession>